<feature type="chain" id="PRO_1000138311" description="UPF0434 protein YcaR">
    <location>
        <begin position="1"/>
        <end position="60"/>
    </location>
</feature>
<gene>
    <name evidence="1" type="primary">ycaR</name>
    <name type="ordered locus">EFER_1061</name>
</gene>
<organism>
    <name type="scientific">Escherichia fergusonii (strain ATCC 35469 / DSM 13698 / CCUG 18766 / IAM 14443 / JCM 21226 / LMG 7866 / NBRC 102419 / NCTC 12128 / CDC 0568-73)</name>
    <dbReference type="NCBI Taxonomy" id="585054"/>
    <lineage>
        <taxon>Bacteria</taxon>
        <taxon>Pseudomonadati</taxon>
        <taxon>Pseudomonadota</taxon>
        <taxon>Gammaproteobacteria</taxon>
        <taxon>Enterobacterales</taxon>
        <taxon>Enterobacteriaceae</taxon>
        <taxon>Escherichia</taxon>
    </lineage>
</organism>
<sequence length="60" mass="6899">MDHRLLEIIACPVCNGKLWYNQEKQELICKLDKLAFPLRDGIPVLLETEARVLTSEESQS</sequence>
<dbReference type="EMBL" id="CU928158">
    <property type="protein sequence ID" value="CAQ88590.1"/>
    <property type="molecule type" value="Genomic_DNA"/>
</dbReference>
<dbReference type="RefSeq" id="WP_000350053.1">
    <property type="nucleotide sequence ID" value="NC_011740.1"/>
</dbReference>
<dbReference type="SMR" id="B7LN79"/>
<dbReference type="GeneID" id="75057888"/>
<dbReference type="KEGG" id="efe:EFER_1061"/>
<dbReference type="HOGENOM" id="CLU_155659_3_1_6"/>
<dbReference type="OrthoDB" id="9812205at2"/>
<dbReference type="Proteomes" id="UP000000745">
    <property type="component" value="Chromosome"/>
</dbReference>
<dbReference type="GO" id="GO:0005829">
    <property type="term" value="C:cytosol"/>
    <property type="evidence" value="ECO:0007669"/>
    <property type="project" value="TreeGrafter"/>
</dbReference>
<dbReference type="FunFam" id="2.20.25.10:FF:000002">
    <property type="entry name" value="UPF0434 protein YcaR"/>
    <property type="match status" value="1"/>
</dbReference>
<dbReference type="Gene3D" id="2.20.25.10">
    <property type="match status" value="1"/>
</dbReference>
<dbReference type="HAMAP" id="MF_01187">
    <property type="entry name" value="UPF0434"/>
    <property type="match status" value="1"/>
</dbReference>
<dbReference type="InterPro" id="IPR005651">
    <property type="entry name" value="Trm112-like"/>
</dbReference>
<dbReference type="NCBIfam" id="NF008806">
    <property type="entry name" value="PRK11827.1"/>
    <property type="match status" value="1"/>
</dbReference>
<dbReference type="PANTHER" id="PTHR33505:SF4">
    <property type="entry name" value="PROTEIN PREY, MITOCHONDRIAL"/>
    <property type="match status" value="1"/>
</dbReference>
<dbReference type="PANTHER" id="PTHR33505">
    <property type="entry name" value="ZGC:162634"/>
    <property type="match status" value="1"/>
</dbReference>
<dbReference type="Pfam" id="PF03966">
    <property type="entry name" value="Trm112p"/>
    <property type="match status" value="1"/>
</dbReference>
<dbReference type="SUPFAM" id="SSF158997">
    <property type="entry name" value="Trm112p-like"/>
    <property type="match status" value="1"/>
</dbReference>
<evidence type="ECO:0000255" key="1">
    <source>
        <dbReference type="HAMAP-Rule" id="MF_01187"/>
    </source>
</evidence>
<name>YCAR_ESCF3</name>
<reference key="1">
    <citation type="journal article" date="2009" name="PLoS Genet.">
        <title>Organised genome dynamics in the Escherichia coli species results in highly diverse adaptive paths.</title>
        <authorList>
            <person name="Touchon M."/>
            <person name="Hoede C."/>
            <person name="Tenaillon O."/>
            <person name="Barbe V."/>
            <person name="Baeriswyl S."/>
            <person name="Bidet P."/>
            <person name="Bingen E."/>
            <person name="Bonacorsi S."/>
            <person name="Bouchier C."/>
            <person name="Bouvet O."/>
            <person name="Calteau A."/>
            <person name="Chiapello H."/>
            <person name="Clermont O."/>
            <person name="Cruveiller S."/>
            <person name="Danchin A."/>
            <person name="Diard M."/>
            <person name="Dossat C."/>
            <person name="Karoui M.E."/>
            <person name="Frapy E."/>
            <person name="Garry L."/>
            <person name="Ghigo J.M."/>
            <person name="Gilles A.M."/>
            <person name="Johnson J."/>
            <person name="Le Bouguenec C."/>
            <person name="Lescat M."/>
            <person name="Mangenot S."/>
            <person name="Martinez-Jehanne V."/>
            <person name="Matic I."/>
            <person name="Nassif X."/>
            <person name="Oztas S."/>
            <person name="Petit M.A."/>
            <person name="Pichon C."/>
            <person name="Rouy Z."/>
            <person name="Ruf C.S."/>
            <person name="Schneider D."/>
            <person name="Tourret J."/>
            <person name="Vacherie B."/>
            <person name="Vallenet D."/>
            <person name="Medigue C."/>
            <person name="Rocha E.P.C."/>
            <person name="Denamur E."/>
        </authorList>
    </citation>
    <scope>NUCLEOTIDE SEQUENCE [LARGE SCALE GENOMIC DNA]</scope>
    <source>
        <strain>ATCC 35469 / DSM 13698 / BCRC 15582 / CCUG 18766 / IAM 14443 / JCM 21226 / LMG 7866 / NBRC 102419 / NCTC 12128 / CDC 0568-73</strain>
    </source>
</reference>
<proteinExistence type="inferred from homology"/>
<comment type="similarity">
    <text evidence="1">Belongs to the UPF0434 family.</text>
</comment>
<protein>
    <recommendedName>
        <fullName evidence="1">UPF0434 protein YcaR</fullName>
    </recommendedName>
</protein>
<accession>B7LN79</accession>